<keyword id="KW-0131">Cell cycle</keyword>
<keyword id="KW-0132">Cell division</keyword>
<keyword id="KW-0342">GTP-binding</keyword>
<keyword id="KW-0460">Magnesium</keyword>
<keyword id="KW-0479">Metal-binding</keyword>
<keyword id="KW-0547">Nucleotide-binding</keyword>
<keyword id="KW-1185">Reference proteome</keyword>
<keyword id="KW-0717">Septation</keyword>
<dbReference type="EMBL" id="CP000356">
    <property type="protein sequence ID" value="ABF51729.1"/>
    <property type="molecule type" value="Genomic_DNA"/>
</dbReference>
<dbReference type="RefSeq" id="WP_011540344.1">
    <property type="nucleotide sequence ID" value="NC_008048.1"/>
</dbReference>
<dbReference type="SMR" id="Q1GN74"/>
<dbReference type="STRING" id="317655.Sala_0003"/>
<dbReference type="KEGG" id="sal:Sala_0003"/>
<dbReference type="eggNOG" id="COG0218">
    <property type="taxonomic scope" value="Bacteria"/>
</dbReference>
<dbReference type="HOGENOM" id="CLU_033732_2_0_5"/>
<dbReference type="OrthoDB" id="9804921at2"/>
<dbReference type="Proteomes" id="UP000006578">
    <property type="component" value="Chromosome"/>
</dbReference>
<dbReference type="GO" id="GO:0005829">
    <property type="term" value="C:cytosol"/>
    <property type="evidence" value="ECO:0007669"/>
    <property type="project" value="TreeGrafter"/>
</dbReference>
<dbReference type="GO" id="GO:0005525">
    <property type="term" value="F:GTP binding"/>
    <property type="evidence" value="ECO:0007669"/>
    <property type="project" value="UniProtKB-UniRule"/>
</dbReference>
<dbReference type="GO" id="GO:0046872">
    <property type="term" value="F:metal ion binding"/>
    <property type="evidence" value="ECO:0007669"/>
    <property type="project" value="UniProtKB-KW"/>
</dbReference>
<dbReference type="GO" id="GO:0000917">
    <property type="term" value="P:division septum assembly"/>
    <property type="evidence" value="ECO:0007669"/>
    <property type="project" value="UniProtKB-KW"/>
</dbReference>
<dbReference type="CDD" id="cd01876">
    <property type="entry name" value="YihA_EngB"/>
    <property type="match status" value="1"/>
</dbReference>
<dbReference type="Gene3D" id="3.40.50.300">
    <property type="entry name" value="P-loop containing nucleotide triphosphate hydrolases"/>
    <property type="match status" value="1"/>
</dbReference>
<dbReference type="HAMAP" id="MF_00321">
    <property type="entry name" value="GTPase_EngB"/>
    <property type="match status" value="1"/>
</dbReference>
<dbReference type="InterPro" id="IPR030393">
    <property type="entry name" value="G_ENGB_dom"/>
</dbReference>
<dbReference type="InterPro" id="IPR006073">
    <property type="entry name" value="GTP-bd"/>
</dbReference>
<dbReference type="InterPro" id="IPR019987">
    <property type="entry name" value="GTP-bd_ribosome_bio_YsxC"/>
</dbReference>
<dbReference type="InterPro" id="IPR027417">
    <property type="entry name" value="P-loop_NTPase"/>
</dbReference>
<dbReference type="NCBIfam" id="TIGR03598">
    <property type="entry name" value="GTPase_YsxC"/>
    <property type="match status" value="1"/>
</dbReference>
<dbReference type="PANTHER" id="PTHR11649:SF13">
    <property type="entry name" value="ENGB-TYPE G DOMAIN-CONTAINING PROTEIN"/>
    <property type="match status" value="1"/>
</dbReference>
<dbReference type="PANTHER" id="PTHR11649">
    <property type="entry name" value="MSS1/TRME-RELATED GTP-BINDING PROTEIN"/>
    <property type="match status" value="1"/>
</dbReference>
<dbReference type="Pfam" id="PF01926">
    <property type="entry name" value="MMR_HSR1"/>
    <property type="match status" value="1"/>
</dbReference>
<dbReference type="SUPFAM" id="SSF52540">
    <property type="entry name" value="P-loop containing nucleoside triphosphate hydrolases"/>
    <property type="match status" value="1"/>
</dbReference>
<dbReference type="PROSITE" id="PS51706">
    <property type="entry name" value="G_ENGB"/>
    <property type="match status" value="1"/>
</dbReference>
<reference key="1">
    <citation type="journal article" date="2009" name="Proc. Natl. Acad. Sci. U.S.A.">
        <title>The genomic basis of trophic strategy in marine bacteria.</title>
        <authorList>
            <person name="Lauro F.M."/>
            <person name="McDougald D."/>
            <person name="Thomas T."/>
            <person name="Williams T.J."/>
            <person name="Egan S."/>
            <person name="Rice S."/>
            <person name="DeMaere M.Z."/>
            <person name="Ting L."/>
            <person name="Ertan H."/>
            <person name="Johnson J."/>
            <person name="Ferriera S."/>
            <person name="Lapidus A."/>
            <person name="Anderson I."/>
            <person name="Kyrpides N."/>
            <person name="Munk A.C."/>
            <person name="Detter C."/>
            <person name="Han C.S."/>
            <person name="Brown M.V."/>
            <person name="Robb F.T."/>
            <person name="Kjelleberg S."/>
            <person name="Cavicchioli R."/>
        </authorList>
    </citation>
    <scope>NUCLEOTIDE SEQUENCE [LARGE SCALE GENOMIC DNA]</scope>
    <source>
        <strain>DSM 13593 / LMG 18877 / RB2256</strain>
    </source>
</reference>
<organism>
    <name type="scientific">Sphingopyxis alaskensis (strain DSM 13593 / LMG 18877 / RB2256)</name>
    <name type="common">Sphingomonas alaskensis</name>
    <dbReference type="NCBI Taxonomy" id="317655"/>
    <lineage>
        <taxon>Bacteria</taxon>
        <taxon>Pseudomonadati</taxon>
        <taxon>Pseudomonadota</taxon>
        <taxon>Alphaproteobacteria</taxon>
        <taxon>Sphingomonadales</taxon>
        <taxon>Sphingomonadaceae</taxon>
        <taxon>Sphingopyxis</taxon>
    </lineage>
</organism>
<protein>
    <recommendedName>
        <fullName evidence="1">Probable GTP-binding protein EngB</fullName>
    </recommendedName>
</protein>
<comment type="function">
    <text evidence="1">Necessary for normal cell division and for the maintenance of normal septation.</text>
</comment>
<comment type="cofactor">
    <cofactor evidence="1">
        <name>Mg(2+)</name>
        <dbReference type="ChEBI" id="CHEBI:18420"/>
    </cofactor>
</comment>
<comment type="similarity">
    <text evidence="1">Belongs to the TRAFAC class TrmE-Era-EngA-EngB-Septin-like GTPase superfamily. EngB GTPase family.</text>
</comment>
<proteinExistence type="inferred from homology"/>
<feature type="chain" id="PRO_0000266954" description="Probable GTP-binding protein EngB">
    <location>
        <begin position="1"/>
        <end position="219"/>
    </location>
</feature>
<feature type="domain" description="EngB-type G" evidence="1">
    <location>
        <begin position="42"/>
        <end position="219"/>
    </location>
</feature>
<feature type="binding site" evidence="1">
    <location>
        <begin position="50"/>
        <end position="57"/>
    </location>
    <ligand>
        <name>GTP</name>
        <dbReference type="ChEBI" id="CHEBI:37565"/>
    </ligand>
</feature>
<feature type="binding site" evidence="1">
    <location>
        <position position="57"/>
    </location>
    <ligand>
        <name>Mg(2+)</name>
        <dbReference type="ChEBI" id="CHEBI:18420"/>
    </ligand>
</feature>
<feature type="binding site" evidence="1">
    <location>
        <begin position="77"/>
        <end position="81"/>
    </location>
    <ligand>
        <name>GTP</name>
        <dbReference type="ChEBI" id="CHEBI:37565"/>
    </ligand>
</feature>
<feature type="binding site" evidence="1">
    <location>
        <position position="79"/>
    </location>
    <ligand>
        <name>Mg(2+)</name>
        <dbReference type="ChEBI" id="CHEBI:18420"/>
    </ligand>
</feature>
<feature type="binding site" evidence="1">
    <location>
        <begin position="97"/>
        <end position="100"/>
    </location>
    <ligand>
        <name>GTP</name>
        <dbReference type="ChEBI" id="CHEBI:37565"/>
    </ligand>
</feature>
<feature type="binding site" evidence="1">
    <location>
        <begin position="164"/>
        <end position="167"/>
    </location>
    <ligand>
        <name>GTP</name>
        <dbReference type="ChEBI" id="CHEBI:37565"/>
    </ligand>
</feature>
<feature type="binding site" evidence="1">
    <location>
        <begin position="198"/>
        <end position="200"/>
    </location>
    <ligand>
        <name>GTP</name>
        <dbReference type="ChEBI" id="CHEBI:37565"/>
    </ligand>
</feature>
<gene>
    <name evidence="1" type="primary">engB</name>
    <name type="ordered locus">Sala_0003</name>
</gene>
<accession>Q1GN74</accession>
<name>ENGB_SPHAL</name>
<sequence>MSEIELEPGADPERAERARKLFSGPIAFLKSAPALQHLPVPSVPEIAFAGRSNVGKSSLLNALTNRNGLARTSVTPGRTQELNYFDVGEPPVFRLVDMPGYGFAKAPKDVVRKWRFLINDYLRGRQVLKRTLVLIDSRHGIKDVDRDVLEMLDTAAVSYRLVLTKADKIKASALADVHAATEAEARKHPAAHPEVIATSSEKGMGIAELRTAVLEAVEL</sequence>
<evidence type="ECO:0000255" key="1">
    <source>
        <dbReference type="HAMAP-Rule" id="MF_00321"/>
    </source>
</evidence>